<sequence length="614" mass="68537">MRGVDVIKENLKHLPSRPGVYRMFGEAGEVLYVGKARDLKARVSNYTRMGGHTQRIARMISLTRAMEFVVTETETEALLLEASLVKSLKPRFNVLLRDDKSFPYILIRRNHEAPQIKKYRGSKQDEGDYFGPFANAGAVMRTLDTLQKAFLLRTCEDSVYSARTRPCMLHQIKRCAAPCVGLVSKEDYTALADEAADFLRGKAGELQKRLASEMEAASEAMEFETAARLRDRIRAIAHVRSTQDVNPDGIEEADVFAIAMDGGVSCVQVFFIRAGQNWGASAHFPRHEKDQTAPEILAAFLVQFYDKRPPPKLILVSEPPDQADLIEEALALKAGRRIELRRPERGTKRDLLTQAERNASEALSRKLAESASQERLLTEVQKVFDLAEAPQRIEVYDNSHIQGTNAVGGMIVAGPEGFRKQAYRKFNIKDTEITPGDDYGMMREVMRRRFARAMKEKVAGNVSDWPDLVLIDGGLGQLNATLETLAELGLTPDDVTLVSIAKGVDRNAGREQFFRPGKAPFKLPENAPVLYYLQRLRDEAHRWAIGAHRQKRAAEAARSPLDEIEGIGPTRKKALLHHFGSARGVSRAKVADLMEVDGVNEALAIRIYGHFNSG</sequence>
<feature type="chain" id="PRO_0000264902" description="UvrABC system protein C">
    <location>
        <begin position="1"/>
        <end position="614"/>
    </location>
</feature>
<feature type="domain" description="GIY-YIG" evidence="1">
    <location>
        <begin position="16"/>
        <end position="94"/>
    </location>
</feature>
<feature type="domain" description="UVR" evidence="1">
    <location>
        <begin position="204"/>
        <end position="239"/>
    </location>
</feature>
<reference key="1">
    <citation type="journal article" date="2006" name="J. Bacteriol.">
        <title>Comparative genomic evidence for a close relationship between the dimorphic prosthecate bacteria Hyphomonas neptunium and Caulobacter crescentus.</title>
        <authorList>
            <person name="Badger J.H."/>
            <person name="Hoover T.R."/>
            <person name="Brun Y.V."/>
            <person name="Weiner R.M."/>
            <person name="Laub M.T."/>
            <person name="Alexandre G."/>
            <person name="Mrazek J."/>
            <person name="Ren Q."/>
            <person name="Paulsen I.T."/>
            <person name="Nelson K.E."/>
            <person name="Khouri H.M."/>
            <person name="Radune D."/>
            <person name="Sosa J."/>
            <person name="Dodson R.J."/>
            <person name="Sullivan S.A."/>
            <person name="Rosovitz M.J."/>
            <person name="Madupu R."/>
            <person name="Brinkac L.M."/>
            <person name="Durkin A.S."/>
            <person name="Daugherty S.C."/>
            <person name="Kothari S.P."/>
            <person name="Giglio M.G."/>
            <person name="Zhou L."/>
            <person name="Haft D.H."/>
            <person name="Selengut J.D."/>
            <person name="Davidsen T.M."/>
            <person name="Yang Q."/>
            <person name="Zafar N."/>
            <person name="Ward N.L."/>
        </authorList>
    </citation>
    <scope>NUCLEOTIDE SEQUENCE [LARGE SCALE GENOMIC DNA]</scope>
    <source>
        <strain>ATCC 15444</strain>
    </source>
</reference>
<gene>
    <name evidence="1" type="primary">uvrC</name>
    <name type="ordered locus">HNE_2966</name>
</gene>
<accession>Q0BY00</accession>
<organism>
    <name type="scientific">Hyphomonas neptunium (strain ATCC 15444)</name>
    <dbReference type="NCBI Taxonomy" id="228405"/>
    <lineage>
        <taxon>Bacteria</taxon>
        <taxon>Pseudomonadati</taxon>
        <taxon>Pseudomonadota</taxon>
        <taxon>Alphaproteobacteria</taxon>
        <taxon>Hyphomonadales</taxon>
        <taxon>Hyphomonadaceae</taxon>
        <taxon>Hyphomonas</taxon>
    </lineage>
</organism>
<dbReference type="EMBL" id="CP000158">
    <property type="protein sequence ID" value="ABI77052.1"/>
    <property type="molecule type" value="Genomic_DNA"/>
</dbReference>
<dbReference type="SMR" id="Q0BY00"/>
<dbReference type="STRING" id="228405.HNE_2966"/>
<dbReference type="KEGG" id="hne:HNE_2966"/>
<dbReference type="eggNOG" id="COG0322">
    <property type="taxonomic scope" value="Bacteria"/>
</dbReference>
<dbReference type="HOGENOM" id="CLU_014841_3_0_5"/>
<dbReference type="Proteomes" id="UP000001959">
    <property type="component" value="Chromosome"/>
</dbReference>
<dbReference type="GO" id="GO:0005737">
    <property type="term" value="C:cytoplasm"/>
    <property type="evidence" value="ECO:0007669"/>
    <property type="project" value="UniProtKB-SubCell"/>
</dbReference>
<dbReference type="GO" id="GO:0009380">
    <property type="term" value="C:excinuclease repair complex"/>
    <property type="evidence" value="ECO:0007669"/>
    <property type="project" value="InterPro"/>
</dbReference>
<dbReference type="GO" id="GO:0003677">
    <property type="term" value="F:DNA binding"/>
    <property type="evidence" value="ECO:0007669"/>
    <property type="project" value="UniProtKB-UniRule"/>
</dbReference>
<dbReference type="GO" id="GO:0009381">
    <property type="term" value="F:excinuclease ABC activity"/>
    <property type="evidence" value="ECO:0007669"/>
    <property type="project" value="UniProtKB-UniRule"/>
</dbReference>
<dbReference type="GO" id="GO:0006289">
    <property type="term" value="P:nucleotide-excision repair"/>
    <property type="evidence" value="ECO:0007669"/>
    <property type="project" value="UniProtKB-UniRule"/>
</dbReference>
<dbReference type="GO" id="GO:0009432">
    <property type="term" value="P:SOS response"/>
    <property type="evidence" value="ECO:0007669"/>
    <property type="project" value="UniProtKB-UniRule"/>
</dbReference>
<dbReference type="CDD" id="cd10434">
    <property type="entry name" value="GIY-YIG_UvrC_Cho"/>
    <property type="match status" value="1"/>
</dbReference>
<dbReference type="FunFam" id="3.30.420.340:FF:000001">
    <property type="entry name" value="UvrABC system protein C"/>
    <property type="match status" value="1"/>
</dbReference>
<dbReference type="FunFam" id="3.40.1440.10:FF:000001">
    <property type="entry name" value="UvrABC system protein C"/>
    <property type="match status" value="1"/>
</dbReference>
<dbReference type="Gene3D" id="1.10.150.20">
    <property type="entry name" value="5' to 3' exonuclease, C-terminal subdomain"/>
    <property type="match status" value="1"/>
</dbReference>
<dbReference type="Gene3D" id="3.40.1440.10">
    <property type="entry name" value="GIY-YIG endonuclease"/>
    <property type="match status" value="1"/>
</dbReference>
<dbReference type="Gene3D" id="4.10.860.10">
    <property type="entry name" value="UVR domain"/>
    <property type="match status" value="1"/>
</dbReference>
<dbReference type="Gene3D" id="3.30.420.340">
    <property type="entry name" value="UvrC, RNAse H endonuclease domain"/>
    <property type="match status" value="1"/>
</dbReference>
<dbReference type="HAMAP" id="MF_00203">
    <property type="entry name" value="UvrC"/>
    <property type="match status" value="1"/>
</dbReference>
<dbReference type="InterPro" id="IPR000305">
    <property type="entry name" value="GIY-YIG_endonuc"/>
</dbReference>
<dbReference type="InterPro" id="IPR035901">
    <property type="entry name" value="GIY-YIG_endonuc_sf"/>
</dbReference>
<dbReference type="InterPro" id="IPR047296">
    <property type="entry name" value="GIY-YIG_UvrC_Cho"/>
</dbReference>
<dbReference type="InterPro" id="IPR003583">
    <property type="entry name" value="Hlx-hairpin-Hlx_DNA-bd_motif"/>
</dbReference>
<dbReference type="InterPro" id="IPR010994">
    <property type="entry name" value="RuvA_2-like"/>
</dbReference>
<dbReference type="InterPro" id="IPR001943">
    <property type="entry name" value="UVR_dom"/>
</dbReference>
<dbReference type="InterPro" id="IPR036876">
    <property type="entry name" value="UVR_dom_sf"/>
</dbReference>
<dbReference type="InterPro" id="IPR050066">
    <property type="entry name" value="UvrABC_protein_C"/>
</dbReference>
<dbReference type="InterPro" id="IPR004791">
    <property type="entry name" value="UvrC"/>
</dbReference>
<dbReference type="InterPro" id="IPR001162">
    <property type="entry name" value="UvrC_RNase_H_dom"/>
</dbReference>
<dbReference type="InterPro" id="IPR038476">
    <property type="entry name" value="UvrC_RNase_H_dom_sf"/>
</dbReference>
<dbReference type="NCBIfam" id="NF001824">
    <property type="entry name" value="PRK00558.1-5"/>
    <property type="match status" value="1"/>
</dbReference>
<dbReference type="NCBIfam" id="TIGR00194">
    <property type="entry name" value="uvrC"/>
    <property type="match status" value="1"/>
</dbReference>
<dbReference type="PANTHER" id="PTHR30562:SF1">
    <property type="entry name" value="UVRABC SYSTEM PROTEIN C"/>
    <property type="match status" value="1"/>
</dbReference>
<dbReference type="PANTHER" id="PTHR30562">
    <property type="entry name" value="UVRC/OXIDOREDUCTASE"/>
    <property type="match status" value="1"/>
</dbReference>
<dbReference type="Pfam" id="PF01541">
    <property type="entry name" value="GIY-YIG"/>
    <property type="match status" value="1"/>
</dbReference>
<dbReference type="Pfam" id="PF14520">
    <property type="entry name" value="HHH_5"/>
    <property type="match status" value="1"/>
</dbReference>
<dbReference type="Pfam" id="PF02151">
    <property type="entry name" value="UVR"/>
    <property type="match status" value="1"/>
</dbReference>
<dbReference type="Pfam" id="PF22920">
    <property type="entry name" value="UvrC_RNaseH"/>
    <property type="match status" value="1"/>
</dbReference>
<dbReference type="Pfam" id="PF08459">
    <property type="entry name" value="UvrC_RNaseH_dom"/>
    <property type="match status" value="1"/>
</dbReference>
<dbReference type="SMART" id="SM00465">
    <property type="entry name" value="GIYc"/>
    <property type="match status" value="1"/>
</dbReference>
<dbReference type="SMART" id="SM00278">
    <property type="entry name" value="HhH1"/>
    <property type="match status" value="2"/>
</dbReference>
<dbReference type="SUPFAM" id="SSF46600">
    <property type="entry name" value="C-terminal UvrC-binding domain of UvrB"/>
    <property type="match status" value="1"/>
</dbReference>
<dbReference type="SUPFAM" id="SSF82771">
    <property type="entry name" value="GIY-YIG endonuclease"/>
    <property type="match status" value="1"/>
</dbReference>
<dbReference type="SUPFAM" id="SSF47781">
    <property type="entry name" value="RuvA domain 2-like"/>
    <property type="match status" value="1"/>
</dbReference>
<dbReference type="PROSITE" id="PS50164">
    <property type="entry name" value="GIY_YIG"/>
    <property type="match status" value="1"/>
</dbReference>
<dbReference type="PROSITE" id="PS50151">
    <property type="entry name" value="UVR"/>
    <property type="match status" value="1"/>
</dbReference>
<dbReference type="PROSITE" id="PS50165">
    <property type="entry name" value="UVRC"/>
    <property type="match status" value="1"/>
</dbReference>
<evidence type="ECO:0000255" key="1">
    <source>
        <dbReference type="HAMAP-Rule" id="MF_00203"/>
    </source>
</evidence>
<keyword id="KW-0963">Cytoplasm</keyword>
<keyword id="KW-0227">DNA damage</keyword>
<keyword id="KW-0228">DNA excision</keyword>
<keyword id="KW-0234">DNA repair</keyword>
<keyword id="KW-0267">Excision nuclease</keyword>
<keyword id="KW-1185">Reference proteome</keyword>
<keyword id="KW-0742">SOS response</keyword>
<proteinExistence type="inferred from homology"/>
<comment type="function">
    <text evidence="1">The UvrABC repair system catalyzes the recognition and processing of DNA lesions. UvrC both incises the 5' and 3' sides of the lesion. The N-terminal half is responsible for the 3' incision and the C-terminal half is responsible for the 5' incision.</text>
</comment>
<comment type="subunit">
    <text evidence="1">Interacts with UvrB in an incision complex.</text>
</comment>
<comment type="subcellular location">
    <subcellularLocation>
        <location evidence="1">Cytoplasm</location>
    </subcellularLocation>
</comment>
<comment type="similarity">
    <text evidence="1">Belongs to the UvrC family.</text>
</comment>
<protein>
    <recommendedName>
        <fullName evidence="1">UvrABC system protein C</fullName>
        <shortName evidence="1">Protein UvrC</shortName>
    </recommendedName>
    <alternativeName>
        <fullName evidence="1">Excinuclease ABC subunit C</fullName>
    </alternativeName>
</protein>
<name>UVRC_HYPNA</name>